<comment type="function">
    <text evidence="1">Catalyzes the biosynthesis of agmatine from arginine.</text>
</comment>
<comment type="catalytic activity">
    <reaction evidence="1">
        <text>L-arginine + H(+) = agmatine + CO2</text>
        <dbReference type="Rhea" id="RHEA:17641"/>
        <dbReference type="ChEBI" id="CHEBI:15378"/>
        <dbReference type="ChEBI" id="CHEBI:16526"/>
        <dbReference type="ChEBI" id="CHEBI:32682"/>
        <dbReference type="ChEBI" id="CHEBI:58145"/>
        <dbReference type="EC" id="4.1.1.19"/>
    </reaction>
</comment>
<comment type="cofactor">
    <cofactor evidence="1">
        <name>Mg(2+)</name>
        <dbReference type="ChEBI" id="CHEBI:18420"/>
    </cofactor>
</comment>
<comment type="cofactor">
    <cofactor evidence="1">
        <name>pyridoxal 5'-phosphate</name>
        <dbReference type="ChEBI" id="CHEBI:597326"/>
    </cofactor>
</comment>
<comment type="pathway">
    <text evidence="1">Amine and polyamine biosynthesis; agmatine biosynthesis; agmatine from L-arginine: step 1/1.</text>
</comment>
<comment type="similarity">
    <text evidence="1">Belongs to the Orn/Lys/Arg decarboxylase class-II family. SpeA subfamily.</text>
</comment>
<name>SPEA_SHEDO</name>
<feature type="chain" id="PRO_1000024267" description="Biosynthetic arginine decarboxylase">
    <location>
        <begin position="1"/>
        <end position="636"/>
    </location>
</feature>
<feature type="binding site" evidence="1">
    <location>
        <begin position="286"/>
        <end position="296"/>
    </location>
    <ligand>
        <name>substrate</name>
    </ligand>
</feature>
<feature type="modified residue" description="N6-(pyridoxal phosphate)lysine" evidence="1">
    <location>
        <position position="101"/>
    </location>
</feature>
<protein>
    <recommendedName>
        <fullName evidence="1">Biosynthetic arginine decarboxylase</fullName>
        <shortName evidence="1">ADC</shortName>
        <ecNumber evidence="1">4.1.1.19</ecNumber>
    </recommendedName>
</protein>
<organism>
    <name type="scientific">Shewanella denitrificans (strain OS217 / ATCC BAA-1090 / DSM 15013)</name>
    <dbReference type="NCBI Taxonomy" id="318161"/>
    <lineage>
        <taxon>Bacteria</taxon>
        <taxon>Pseudomonadati</taxon>
        <taxon>Pseudomonadota</taxon>
        <taxon>Gammaproteobacteria</taxon>
        <taxon>Alteromonadales</taxon>
        <taxon>Shewanellaceae</taxon>
        <taxon>Shewanella</taxon>
    </lineage>
</organism>
<evidence type="ECO:0000255" key="1">
    <source>
        <dbReference type="HAMAP-Rule" id="MF_01417"/>
    </source>
</evidence>
<proteinExistence type="inferred from homology"/>
<gene>
    <name evidence="1" type="primary">speA</name>
    <name type="ordered locus">Sden_2280</name>
</gene>
<reference key="1">
    <citation type="submission" date="2006-03" db="EMBL/GenBank/DDBJ databases">
        <title>Complete sequence of Shewanella denitrificans OS217.</title>
        <authorList>
            <consortium name="US DOE Joint Genome Institute"/>
            <person name="Copeland A."/>
            <person name="Lucas S."/>
            <person name="Lapidus A."/>
            <person name="Barry K."/>
            <person name="Detter J.C."/>
            <person name="Glavina del Rio T."/>
            <person name="Hammon N."/>
            <person name="Israni S."/>
            <person name="Dalin E."/>
            <person name="Tice H."/>
            <person name="Pitluck S."/>
            <person name="Brettin T."/>
            <person name="Bruce D."/>
            <person name="Han C."/>
            <person name="Tapia R."/>
            <person name="Gilna P."/>
            <person name="Kiss H."/>
            <person name="Schmutz J."/>
            <person name="Larimer F."/>
            <person name="Land M."/>
            <person name="Hauser L."/>
            <person name="Kyrpides N."/>
            <person name="Lykidis A."/>
            <person name="Richardson P."/>
        </authorList>
    </citation>
    <scope>NUCLEOTIDE SEQUENCE [LARGE SCALE GENOMIC DNA]</scope>
    <source>
        <strain>OS217 / ATCC BAA-1090 / DSM 15013</strain>
    </source>
</reference>
<sequence>MNDWTIEDARAGYNVTHWSQGFYGIGEAGEVTVSPDPLNPSNKVALDTLAQDLVQAGIALPVLVRFPQILHHRVESLCDAFNQAIQKYEYQNDYLLVYPIKVNQQKTVVEEILASQVSKEVPQLGLEAGSKPELMAVLAMAQKASSVIVCNGYKDKEYVRLALIGEKLGHKVYIVLEKMSELKMVLEEARELGVTPRLGLRTRLAFQGKGKWQASGGEKSKFGLSAAQVLKVVDELKEANMLESLQLLHFHLGSQIANIRDIRQGVSEAGRFYCELRQLGASINCFDVGGGLAVDYDGTRSQSNNSMNYGLTEYANNIVNVLTDLCNEYEQPMPRIISESGRHLTAHHAVLITDVIGTEAYMPENIQAPAEDAPQLLHNMWQSWTEISGRHDQRAIIEIYHDSQSDIAEAHSLFAVGQLSLMDRAWAEQTNLRVCHEVKGLLSNNNRYHRPVIDELNEKLADKLFVNFSLFQSLPDAWGIDQVFPVLPLTCLDKAPERRAVMLDITCDSDGIVDQYVDGQGIETTLPVPAWDPANPYLIGFFMVGAYQEILGDMHNLFGDTNSAVVFVEDNGKARIESTLDGDTVADVLRYVNLDADEFMHTYEELVEQHIVEDERASILEELQLGLKGYTYLEDF</sequence>
<accession>Q12LW6</accession>
<keyword id="KW-0210">Decarboxylase</keyword>
<keyword id="KW-0456">Lyase</keyword>
<keyword id="KW-0460">Magnesium</keyword>
<keyword id="KW-0479">Metal-binding</keyword>
<keyword id="KW-0620">Polyamine biosynthesis</keyword>
<keyword id="KW-0663">Pyridoxal phosphate</keyword>
<keyword id="KW-1185">Reference proteome</keyword>
<keyword id="KW-0745">Spermidine biosynthesis</keyword>
<dbReference type="EC" id="4.1.1.19" evidence="1"/>
<dbReference type="EMBL" id="CP000302">
    <property type="protein sequence ID" value="ABE55560.1"/>
    <property type="molecule type" value="Genomic_DNA"/>
</dbReference>
<dbReference type="RefSeq" id="WP_011496711.1">
    <property type="nucleotide sequence ID" value="NC_007954.1"/>
</dbReference>
<dbReference type="SMR" id="Q12LW6"/>
<dbReference type="STRING" id="318161.Sden_2280"/>
<dbReference type="KEGG" id="sdn:Sden_2280"/>
<dbReference type="eggNOG" id="COG1166">
    <property type="taxonomic scope" value="Bacteria"/>
</dbReference>
<dbReference type="HOGENOM" id="CLU_027243_1_0_6"/>
<dbReference type="OrthoDB" id="9802658at2"/>
<dbReference type="UniPathway" id="UPA00186">
    <property type="reaction ID" value="UER00284"/>
</dbReference>
<dbReference type="Proteomes" id="UP000001982">
    <property type="component" value="Chromosome"/>
</dbReference>
<dbReference type="GO" id="GO:0008792">
    <property type="term" value="F:arginine decarboxylase activity"/>
    <property type="evidence" value="ECO:0007669"/>
    <property type="project" value="UniProtKB-UniRule"/>
</dbReference>
<dbReference type="GO" id="GO:0046872">
    <property type="term" value="F:metal ion binding"/>
    <property type="evidence" value="ECO:0007669"/>
    <property type="project" value="UniProtKB-KW"/>
</dbReference>
<dbReference type="GO" id="GO:0006527">
    <property type="term" value="P:arginine catabolic process"/>
    <property type="evidence" value="ECO:0007669"/>
    <property type="project" value="InterPro"/>
</dbReference>
<dbReference type="GO" id="GO:0033388">
    <property type="term" value="P:putrescine biosynthetic process from arginine"/>
    <property type="evidence" value="ECO:0007669"/>
    <property type="project" value="TreeGrafter"/>
</dbReference>
<dbReference type="GO" id="GO:0008295">
    <property type="term" value="P:spermidine biosynthetic process"/>
    <property type="evidence" value="ECO:0007669"/>
    <property type="project" value="UniProtKB-UniRule"/>
</dbReference>
<dbReference type="CDD" id="cd06830">
    <property type="entry name" value="PLPDE_III_ADC"/>
    <property type="match status" value="1"/>
</dbReference>
<dbReference type="FunFam" id="1.10.287.3440:FF:000001">
    <property type="entry name" value="Biosynthetic arginine decarboxylase"/>
    <property type="match status" value="1"/>
</dbReference>
<dbReference type="FunFam" id="2.40.37.10:FF:000001">
    <property type="entry name" value="Biosynthetic arginine decarboxylase"/>
    <property type="match status" value="1"/>
</dbReference>
<dbReference type="FunFam" id="3.20.20.10:FF:000001">
    <property type="entry name" value="Biosynthetic arginine decarboxylase"/>
    <property type="match status" value="1"/>
</dbReference>
<dbReference type="Gene3D" id="1.10.287.3440">
    <property type="match status" value="1"/>
</dbReference>
<dbReference type="Gene3D" id="1.20.58.930">
    <property type="match status" value="1"/>
</dbReference>
<dbReference type="Gene3D" id="3.20.20.10">
    <property type="entry name" value="Alanine racemase"/>
    <property type="match status" value="1"/>
</dbReference>
<dbReference type="Gene3D" id="2.40.37.10">
    <property type="entry name" value="Lyase, Ornithine Decarboxylase, Chain A, domain 1"/>
    <property type="match status" value="1"/>
</dbReference>
<dbReference type="HAMAP" id="MF_01417">
    <property type="entry name" value="SpeA"/>
    <property type="match status" value="1"/>
</dbReference>
<dbReference type="InterPro" id="IPR009006">
    <property type="entry name" value="Ala_racemase/Decarboxylase_C"/>
</dbReference>
<dbReference type="InterPro" id="IPR040634">
    <property type="entry name" value="Arg_decarb_HB"/>
</dbReference>
<dbReference type="InterPro" id="IPR041128">
    <property type="entry name" value="Arg_decarbox_C"/>
</dbReference>
<dbReference type="InterPro" id="IPR002985">
    <property type="entry name" value="Arg_decrbxlase"/>
</dbReference>
<dbReference type="InterPro" id="IPR022644">
    <property type="entry name" value="De-COase2_N"/>
</dbReference>
<dbReference type="InterPro" id="IPR000183">
    <property type="entry name" value="Orn/DAP/Arg_de-COase"/>
</dbReference>
<dbReference type="InterPro" id="IPR029066">
    <property type="entry name" value="PLP-binding_barrel"/>
</dbReference>
<dbReference type="NCBIfam" id="NF003763">
    <property type="entry name" value="PRK05354.1"/>
    <property type="match status" value="1"/>
</dbReference>
<dbReference type="NCBIfam" id="TIGR01273">
    <property type="entry name" value="speA"/>
    <property type="match status" value="1"/>
</dbReference>
<dbReference type="PANTHER" id="PTHR43295">
    <property type="entry name" value="ARGININE DECARBOXYLASE"/>
    <property type="match status" value="1"/>
</dbReference>
<dbReference type="PANTHER" id="PTHR43295:SF9">
    <property type="entry name" value="BIOSYNTHETIC ARGININE DECARBOXYLASE"/>
    <property type="match status" value="1"/>
</dbReference>
<dbReference type="Pfam" id="PF17810">
    <property type="entry name" value="Arg_decarb_HB"/>
    <property type="match status" value="1"/>
</dbReference>
<dbReference type="Pfam" id="PF17944">
    <property type="entry name" value="Arg_decarbox_C"/>
    <property type="match status" value="1"/>
</dbReference>
<dbReference type="Pfam" id="PF02784">
    <property type="entry name" value="Orn_Arg_deC_N"/>
    <property type="match status" value="1"/>
</dbReference>
<dbReference type="PIRSF" id="PIRSF001336">
    <property type="entry name" value="Arg_decrbxlase"/>
    <property type="match status" value="1"/>
</dbReference>
<dbReference type="PRINTS" id="PR01180">
    <property type="entry name" value="ARGDCRBXLASE"/>
</dbReference>
<dbReference type="PRINTS" id="PR01179">
    <property type="entry name" value="ODADCRBXLASE"/>
</dbReference>
<dbReference type="SUPFAM" id="SSF51419">
    <property type="entry name" value="PLP-binding barrel"/>
    <property type="match status" value="1"/>
</dbReference>